<protein>
    <recommendedName>
        <fullName evidence="4">Plant cysteine oxidase 5</fullName>
        <shortName evidence="5">AtPCO5</shortName>
        <ecNumber evidence="1 2 3 7">1.13.11.20</ecNumber>
    </recommendedName>
</protein>
<sequence length="242" mass="27223">MPYFIQRLFNTCKSSLSPNGPVSEEALDKVRNVLEKIKPSDVGLEQEAQLVRNWPGPGNERNGNHHSLPAIKYLQLHECDSFSIGIFCMPPGSIIPLHNHPGMTVLSKLVYGSMHVKSYDWAEPDQSELDDPLQARPAKLVKDIDMTSPSPATTLYPTTGGNIHCFKAITHCAIFDILSPPYSSTHGRHCNYFRKSPMLDLPGEIEVMNGEVISNVTWLEEYQPPDNFVIWRVPYRGPVIRK</sequence>
<evidence type="ECO:0000269" key="1">
    <source>
    </source>
</evidence>
<evidence type="ECO:0000269" key="2">
    <source>
    </source>
</evidence>
<evidence type="ECO:0000269" key="3">
    <source>
    </source>
</evidence>
<evidence type="ECO:0000303" key="4">
    <source>
    </source>
</evidence>
<evidence type="ECO:0000303" key="5">
    <source>
    </source>
</evidence>
<evidence type="ECO:0000305" key="6"/>
<evidence type="ECO:0000305" key="7">
    <source>
    </source>
</evidence>
<evidence type="ECO:0000312" key="8">
    <source>
        <dbReference type="Araport" id="AT3G58670"/>
    </source>
</evidence>
<evidence type="ECO:0000312" key="9">
    <source>
        <dbReference type="EMBL" id="CAB88284.1"/>
    </source>
</evidence>
<evidence type="ECO:0007744" key="10">
    <source>
        <dbReference type="PDB" id="7CHI"/>
    </source>
</evidence>
<evidence type="ECO:0007829" key="11">
    <source>
        <dbReference type="PDB" id="6SBP"/>
    </source>
</evidence>
<evidence type="ECO:0007829" key="12">
    <source>
        <dbReference type="PDB" id="7CHI"/>
    </source>
</evidence>
<reference key="1">
    <citation type="journal article" date="2000" name="Nature">
        <title>Sequence and analysis of chromosome 3 of the plant Arabidopsis thaliana.</title>
        <authorList>
            <person name="Salanoubat M."/>
            <person name="Lemcke K."/>
            <person name="Rieger M."/>
            <person name="Ansorge W."/>
            <person name="Unseld M."/>
            <person name="Fartmann B."/>
            <person name="Valle G."/>
            <person name="Bloecker H."/>
            <person name="Perez-Alonso M."/>
            <person name="Obermaier B."/>
            <person name="Delseny M."/>
            <person name="Boutry M."/>
            <person name="Grivell L.A."/>
            <person name="Mache R."/>
            <person name="Puigdomenech P."/>
            <person name="De Simone V."/>
            <person name="Choisne N."/>
            <person name="Artiguenave F."/>
            <person name="Robert C."/>
            <person name="Brottier P."/>
            <person name="Wincker P."/>
            <person name="Cattolico L."/>
            <person name="Weissenbach J."/>
            <person name="Saurin W."/>
            <person name="Quetier F."/>
            <person name="Schaefer M."/>
            <person name="Mueller-Auer S."/>
            <person name="Gabel C."/>
            <person name="Fuchs M."/>
            <person name="Benes V."/>
            <person name="Wurmbach E."/>
            <person name="Drzonek H."/>
            <person name="Erfle H."/>
            <person name="Jordan N."/>
            <person name="Bangert S."/>
            <person name="Wiedelmann R."/>
            <person name="Kranz H."/>
            <person name="Voss H."/>
            <person name="Holland R."/>
            <person name="Brandt P."/>
            <person name="Nyakatura G."/>
            <person name="Vezzi A."/>
            <person name="D'Angelo M."/>
            <person name="Pallavicini A."/>
            <person name="Toppo S."/>
            <person name="Simionati B."/>
            <person name="Conrad A."/>
            <person name="Hornischer K."/>
            <person name="Kauer G."/>
            <person name="Loehnert T.-H."/>
            <person name="Nordsiek G."/>
            <person name="Reichelt J."/>
            <person name="Scharfe M."/>
            <person name="Schoen O."/>
            <person name="Bargues M."/>
            <person name="Terol J."/>
            <person name="Climent J."/>
            <person name="Navarro P."/>
            <person name="Collado C."/>
            <person name="Perez-Perez A."/>
            <person name="Ottenwaelder B."/>
            <person name="Duchemin D."/>
            <person name="Cooke R."/>
            <person name="Laudie M."/>
            <person name="Berger-Llauro C."/>
            <person name="Purnelle B."/>
            <person name="Masuy D."/>
            <person name="de Haan M."/>
            <person name="Maarse A.C."/>
            <person name="Alcaraz J.-P."/>
            <person name="Cottet A."/>
            <person name="Casacuberta E."/>
            <person name="Monfort A."/>
            <person name="Argiriou A."/>
            <person name="Flores M."/>
            <person name="Liguori R."/>
            <person name="Vitale D."/>
            <person name="Mannhaupt G."/>
            <person name="Haase D."/>
            <person name="Schoof H."/>
            <person name="Rudd S."/>
            <person name="Zaccaria P."/>
            <person name="Mewes H.-W."/>
            <person name="Mayer K.F.X."/>
            <person name="Kaul S."/>
            <person name="Town C.D."/>
            <person name="Koo H.L."/>
            <person name="Tallon L.J."/>
            <person name="Jenkins J."/>
            <person name="Rooney T."/>
            <person name="Rizzo M."/>
            <person name="Walts A."/>
            <person name="Utterback T."/>
            <person name="Fujii C.Y."/>
            <person name="Shea T.P."/>
            <person name="Creasy T.H."/>
            <person name="Haas B."/>
            <person name="Maiti R."/>
            <person name="Wu D."/>
            <person name="Peterson J."/>
            <person name="Van Aken S."/>
            <person name="Pai G."/>
            <person name="Militscher J."/>
            <person name="Sellers P."/>
            <person name="Gill J.E."/>
            <person name="Feldblyum T.V."/>
            <person name="Preuss D."/>
            <person name="Lin X."/>
            <person name="Nierman W.C."/>
            <person name="Salzberg S.L."/>
            <person name="White O."/>
            <person name="Venter J.C."/>
            <person name="Fraser C.M."/>
            <person name="Kaneko T."/>
            <person name="Nakamura Y."/>
            <person name="Sato S."/>
            <person name="Kato T."/>
            <person name="Asamizu E."/>
            <person name="Sasamoto S."/>
            <person name="Kimura T."/>
            <person name="Idesawa K."/>
            <person name="Kawashima K."/>
            <person name="Kishida Y."/>
            <person name="Kiyokawa C."/>
            <person name="Kohara M."/>
            <person name="Matsumoto M."/>
            <person name="Matsuno A."/>
            <person name="Muraki A."/>
            <person name="Nakayama S."/>
            <person name="Nakazaki N."/>
            <person name="Shinpo S."/>
            <person name="Takeuchi C."/>
            <person name="Wada T."/>
            <person name="Watanabe A."/>
            <person name="Yamada M."/>
            <person name="Yasuda M."/>
            <person name="Tabata S."/>
        </authorList>
    </citation>
    <scope>NUCLEOTIDE SEQUENCE [LARGE SCALE GENOMIC DNA]</scope>
    <source>
        <strain>cv. Columbia</strain>
    </source>
</reference>
<reference key="2">
    <citation type="journal article" date="2017" name="Plant J.">
        <title>Araport11: a complete reannotation of the Arabidopsis thaliana reference genome.</title>
        <authorList>
            <person name="Cheng C.Y."/>
            <person name="Krishnakumar V."/>
            <person name="Chan A.P."/>
            <person name="Thibaud-Nissen F."/>
            <person name="Schobel S."/>
            <person name="Town C.D."/>
        </authorList>
    </citation>
    <scope>GENOME REANNOTATION</scope>
    <source>
        <strain>cv. Columbia</strain>
    </source>
</reference>
<reference key="3">
    <citation type="journal article" date="2003" name="Science">
        <title>Empirical analysis of transcriptional activity in the Arabidopsis genome.</title>
        <authorList>
            <person name="Yamada K."/>
            <person name="Lim J."/>
            <person name="Dale J.M."/>
            <person name="Chen H."/>
            <person name="Shinn P."/>
            <person name="Palm C.J."/>
            <person name="Southwick A.M."/>
            <person name="Wu H.C."/>
            <person name="Kim C.J."/>
            <person name="Nguyen M."/>
            <person name="Pham P.K."/>
            <person name="Cheuk R.F."/>
            <person name="Karlin-Newmann G."/>
            <person name="Liu S.X."/>
            <person name="Lam B."/>
            <person name="Sakano H."/>
            <person name="Wu T."/>
            <person name="Yu G."/>
            <person name="Miranda M."/>
            <person name="Quach H.L."/>
            <person name="Tripp M."/>
            <person name="Chang C.H."/>
            <person name="Lee J.M."/>
            <person name="Toriumi M.J."/>
            <person name="Chan M.M."/>
            <person name="Tang C.C."/>
            <person name="Onodera C.S."/>
            <person name="Deng J.M."/>
            <person name="Akiyama K."/>
            <person name="Ansari Y."/>
            <person name="Arakawa T."/>
            <person name="Banh J."/>
            <person name="Banno F."/>
            <person name="Bowser L."/>
            <person name="Brooks S.Y."/>
            <person name="Carninci P."/>
            <person name="Chao Q."/>
            <person name="Choy N."/>
            <person name="Enju A."/>
            <person name="Goldsmith A.D."/>
            <person name="Gurjal M."/>
            <person name="Hansen N.F."/>
            <person name="Hayashizaki Y."/>
            <person name="Johnson-Hopson C."/>
            <person name="Hsuan V.W."/>
            <person name="Iida K."/>
            <person name="Karnes M."/>
            <person name="Khan S."/>
            <person name="Koesema E."/>
            <person name="Ishida J."/>
            <person name="Jiang P.X."/>
            <person name="Jones T."/>
            <person name="Kawai J."/>
            <person name="Kamiya A."/>
            <person name="Meyers C."/>
            <person name="Nakajima M."/>
            <person name="Narusaka M."/>
            <person name="Seki M."/>
            <person name="Sakurai T."/>
            <person name="Satou M."/>
            <person name="Tamse R."/>
            <person name="Vaysberg M."/>
            <person name="Wallender E.K."/>
            <person name="Wong C."/>
            <person name="Yamamura Y."/>
            <person name="Yuan S."/>
            <person name="Shinozaki K."/>
            <person name="Davis R.W."/>
            <person name="Theologis A."/>
            <person name="Ecker J.R."/>
        </authorList>
    </citation>
    <scope>NUCLEOTIDE SEQUENCE [LARGE SCALE MRNA]</scope>
    <source>
        <strain>cv. Columbia</strain>
    </source>
</reference>
<reference key="4">
    <citation type="submission" date="2002-03" db="EMBL/GenBank/DDBJ databases">
        <title>Full-length cDNA from Arabidopsis thaliana.</title>
        <authorList>
            <person name="Brover V.V."/>
            <person name="Troukhan M.E."/>
            <person name="Alexandrov N.A."/>
            <person name="Lu Y.-P."/>
            <person name="Flavell R.B."/>
            <person name="Feldmann K.A."/>
        </authorList>
    </citation>
    <scope>NUCLEOTIDE SEQUENCE [LARGE SCALE MRNA]</scope>
</reference>
<reference key="5">
    <citation type="journal article" date="2014" name="Nat. Commun.">
        <title>Plant cysteine oxidases control the oxygen-dependent branch of the N-end-rule pathway.</title>
        <authorList>
            <person name="Weits D.A."/>
            <person name="Giuntoli B."/>
            <person name="Kosmacz M."/>
            <person name="Parlanti S."/>
            <person name="Hubberten H.M."/>
            <person name="Riegler H."/>
            <person name="Hoefgen R."/>
            <person name="Perata P."/>
            <person name="van Dongen J.T."/>
            <person name="Licausi F."/>
        </authorList>
    </citation>
    <scope>FUNCTION</scope>
    <scope>CATALYTIC ACTIVITY</scope>
    <scope>GENE FAMILY</scope>
    <scope>NOMENCLATURE</scope>
    <scope>SUBCELLULAR LOCATION</scope>
</reference>
<reference key="6">
    <citation type="journal article" date="2018" name="J. Biol. Chem.">
        <title>The plant cysteine oxidases from Arabidopsis thaliana are kinetically tailored to act as oxygen sensors.</title>
        <authorList>
            <person name="White M.D."/>
            <person name="Kamps J.J.A.G."/>
            <person name="East S."/>
            <person name="Taylor Kearney L.J."/>
            <person name="Flashman E."/>
        </authorList>
    </citation>
    <scope>FUNCTION</scope>
    <scope>CATALYTIC ACTIVITY</scope>
    <scope>BIOPHYSICOCHEMICAL PROPERTIES</scope>
</reference>
<reference key="7">
    <citation type="journal article" date="2020" name="J. Struct. Biol.">
        <title>Molecular basis for cysteine oxidation by plant cysteine oxidases from Arabidopsis thaliana.</title>
        <authorList>
            <person name="Chen Z."/>
            <person name="Guo Q."/>
            <person name="Wu G."/>
            <person name="Wen J."/>
            <person name="Liao S."/>
            <person name="Xu C."/>
        </authorList>
    </citation>
    <scope>X-RAY CRYSTALLOGRAPHY (2.50 ANGSTROMS) OF 1-242 IN COMPLEX WITH IRON IONS</scope>
    <scope>FUNCTION</scope>
    <scope>CATALYTIC ACTIVITY</scope>
    <scope>COFACTOR</scope>
    <scope>MUTAGENESIS OF HIS-164; ASP-176; TYR-182 AND CYS-190</scope>
</reference>
<reference key="8">
    <citation type="journal article" date="2020" name="Proc. Natl. Acad. Sci. U.S.A.">
        <title>Structures of Arabidopsis thaliana oxygen-sensing plant cysteine oxidases 4 and 5 enable targeted manipulation of their activity.</title>
        <authorList>
            <person name="White M.D."/>
            <person name="Dalle Carbonare L."/>
            <person name="Lavilla Puerta M."/>
            <person name="Iacopino S."/>
            <person name="Edwards M."/>
            <person name="Dunne K."/>
            <person name="Pires E."/>
            <person name="Levy C."/>
            <person name="McDonough M.A."/>
            <person name="Licausi F."/>
            <person name="Flashman E."/>
        </authorList>
    </citation>
    <scope>X-RAY CRYSTALLOGRAPHY (1.91 ANGSTROMS) IN COMPLEX WITH IRON IONS</scope>
    <scope>FUNCTION</scope>
    <scope>CATALYTIC ACTIVITY</scope>
</reference>
<dbReference type="EC" id="1.13.11.20" evidence="1 2 3 7"/>
<dbReference type="EMBL" id="AL353032">
    <property type="protein sequence ID" value="CAB88284.1"/>
    <property type="molecule type" value="Genomic_DNA"/>
</dbReference>
<dbReference type="EMBL" id="CP002686">
    <property type="protein sequence ID" value="AEE79813.1"/>
    <property type="molecule type" value="Genomic_DNA"/>
</dbReference>
<dbReference type="EMBL" id="CP002686">
    <property type="protein sequence ID" value="AEE79814.1"/>
    <property type="molecule type" value="Genomic_DNA"/>
</dbReference>
<dbReference type="EMBL" id="CP002686">
    <property type="protein sequence ID" value="AEE79815.1"/>
    <property type="molecule type" value="Genomic_DNA"/>
</dbReference>
<dbReference type="EMBL" id="AY050940">
    <property type="protein sequence ID" value="AAK93617.1"/>
    <property type="molecule type" value="mRNA"/>
</dbReference>
<dbReference type="EMBL" id="AY142515">
    <property type="protein sequence ID" value="AAN13116.1"/>
    <property type="molecule type" value="mRNA"/>
</dbReference>
<dbReference type="EMBL" id="AY084662">
    <property type="protein sequence ID" value="AAM61224.1"/>
    <property type="molecule type" value="mRNA"/>
</dbReference>
<dbReference type="PIR" id="T49150">
    <property type="entry name" value="T49150"/>
</dbReference>
<dbReference type="RefSeq" id="NP_001078310.1">
    <property type="nucleotide sequence ID" value="NM_001084841.2"/>
</dbReference>
<dbReference type="RefSeq" id="NP_001190128.1">
    <property type="nucleotide sequence ID" value="NM_001203199.1"/>
</dbReference>
<dbReference type="RefSeq" id="NP_191426.1">
    <property type="nucleotide sequence ID" value="NM_115729.4"/>
</dbReference>
<dbReference type="PDB" id="6SBP">
    <property type="method" value="X-ray"/>
    <property type="resolution" value="1.91 A"/>
    <property type="chains" value="A=1-242"/>
</dbReference>
<dbReference type="PDB" id="7CHI">
    <property type="method" value="X-ray"/>
    <property type="resolution" value="2.50 A"/>
    <property type="chains" value="A=1-242"/>
</dbReference>
<dbReference type="PDBsum" id="6SBP"/>
<dbReference type="PDBsum" id="7CHI"/>
<dbReference type="SMR" id="Q9LXT4"/>
<dbReference type="FunCoup" id="Q9LXT4">
    <property type="interactions" value="2483"/>
</dbReference>
<dbReference type="IntAct" id="Q9LXT4">
    <property type="interactions" value="1"/>
</dbReference>
<dbReference type="STRING" id="3702.Q9LXT4"/>
<dbReference type="PaxDb" id="3702-AT3G58670.3"/>
<dbReference type="ProteomicsDB" id="236371"/>
<dbReference type="EnsemblPlants" id="AT3G58670.1">
    <property type="protein sequence ID" value="AT3G58670.1"/>
    <property type="gene ID" value="AT3G58670"/>
</dbReference>
<dbReference type="EnsemblPlants" id="AT3G58670.2">
    <property type="protein sequence ID" value="AT3G58670.2"/>
    <property type="gene ID" value="AT3G58670"/>
</dbReference>
<dbReference type="EnsemblPlants" id="AT3G58670.3">
    <property type="protein sequence ID" value="AT3G58670.3"/>
    <property type="gene ID" value="AT3G58670"/>
</dbReference>
<dbReference type="GeneID" id="825036"/>
<dbReference type="Gramene" id="AT3G58670.1">
    <property type="protein sequence ID" value="AT3G58670.1"/>
    <property type="gene ID" value="AT3G58670"/>
</dbReference>
<dbReference type="Gramene" id="AT3G58670.2">
    <property type="protein sequence ID" value="AT3G58670.2"/>
    <property type="gene ID" value="AT3G58670"/>
</dbReference>
<dbReference type="Gramene" id="AT3G58670.3">
    <property type="protein sequence ID" value="AT3G58670.3"/>
    <property type="gene ID" value="AT3G58670"/>
</dbReference>
<dbReference type="KEGG" id="ath:AT3G58670"/>
<dbReference type="Araport" id="AT3G58670"/>
<dbReference type="TAIR" id="AT3G58670">
    <property type="gene designation" value="PCO5"/>
</dbReference>
<dbReference type="eggNOG" id="KOG4281">
    <property type="taxonomic scope" value="Eukaryota"/>
</dbReference>
<dbReference type="HOGENOM" id="CLU_061320_3_2_1"/>
<dbReference type="InParanoid" id="Q9LXT4"/>
<dbReference type="OMA" id="RCIWGKL"/>
<dbReference type="OrthoDB" id="271433at2759"/>
<dbReference type="PhylomeDB" id="Q9LXT4"/>
<dbReference type="SABIO-RK" id="Q9LXT4"/>
<dbReference type="PRO" id="PR:Q9LXT4"/>
<dbReference type="Proteomes" id="UP000006548">
    <property type="component" value="Chromosome 3"/>
</dbReference>
<dbReference type="ExpressionAtlas" id="Q9LXT4">
    <property type="expression patterns" value="baseline and differential"/>
</dbReference>
<dbReference type="GO" id="GO:0005737">
    <property type="term" value="C:cytoplasm"/>
    <property type="evidence" value="ECO:0007669"/>
    <property type="project" value="UniProtKB-SubCell"/>
</dbReference>
<dbReference type="GO" id="GO:0005634">
    <property type="term" value="C:nucleus"/>
    <property type="evidence" value="ECO:0007669"/>
    <property type="project" value="UniProtKB-SubCell"/>
</dbReference>
<dbReference type="GO" id="GO:0017172">
    <property type="term" value="F:cysteine dioxygenase activity"/>
    <property type="evidence" value="ECO:0007669"/>
    <property type="project" value="UniProtKB-EC"/>
</dbReference>
<dbReference type="GO" id="GO:0005506">
    <property type="term" value="F:iron ion binding"/>
    <property type="evidence" value="ECO:0000314"/>
    <property type="project" value="UniProtKB"/>
</dbReference>
<dbReference type="GO" id="GO:0071456">
    <property type="term" value="P:cellular response to hypoxia"/>
    <property type="evidence" value="ECO:0000314"/>
    <property type="project" value="UniProtKB"/>
</dbReference>
<dbReference type="GO" id="GO:0070483">
    <property type="term" value="P:detection of hypoxia"/>
    <property type="evidence" value="ECO:0000314"/>
    <property type="project" value="UniProtKB"/>
</dbReference>
<dbReference type="GO" id="GO:0018171">
    <property type="term" value="P:peptidyl-cysteine oxidation"/>
    <property type="evidence" value="ECO:0000314"/>
    <property type="project" value="UniProtKB"/>
</dbReference>
<dbReference type="CDD" id="cd20289">
    <property type="entry name" value="cupin_ADO"/>
    <property type="match status" value="1"/>
</dbReference>
<dbReference type="Gene3D" id="2.60.120.10">
    <property type="entry name" value="Jelly Rolls"/>
    <property type="match status" value="1"/>
</dbReference>
<dbReference type="InterPro" id="IPR012864">
    <property type="entry name" value="PCO/ADO"/>
</dbReference>
<dbReference type="InterPro" id="IPR014710">
    <property type="entry name" value="RmlC-like_jellyroll"/>
</dbReference>
<dbReference type="InterPro" id="IPR011051">
    <property type="entry name" value="RmlC_Cupin_sf"/>
</dbReference>
<dbReference type="PANTHER" id="PTHR22966">
    <property type="entry name" value="2-AMINOETHANETHIOL DIOXYGENASE"/>
    <property type="match status" value="1"/>
</dbReference>
<dbReference type="PANTHER" id="PTHR22966:SF37">
    <property type="entry name" value="PLANT CYSTEINE OXIDASE 5"/>
    <property type="match status" value="1"/>
</dbReference>
<dbReference type="Pfam" id="PF07847">
    <property type="entry name" value="PCO_ADO"/>
    <property type="match status" value="1"/>
</dbReference>
<dbReference type="SUPFAM" id="SSF51182">
    <property type="entry name" value="RmlC-like cupins"/>
    <property type="match status" value="1"/>
</dbReference>
<organism>
    <name type="scientific">Arabidopsis thaliana</name>
    <name type="common">Mouse-ear cress</name>
    <dbReference type="NCBI Taxonomy" id="3702"/>
    <lineage>
        <taxon>Eukaryota</taxon>
        <taxon>Viridiplantae</taxon>
        <taxon>Streptophyta</taxon>
        <taxon>Embryophyta</taxon>
        <taxon>Tracheophyta</taxon>
        <taxon>Spermatophyta</taxon>
        <taxon>Magnoliopsida</taxon>
        <taxon>eudicotyledons</taxon>
        <taxon>Gunneridae</taxon>
        <taxon>Pentapetalae</taxon>
        <taxon>rosids</taxon>
        <taxon>malvids</taxon>
        <taxon>Brassicales</taxon>
        <taxon>Brassicaceae</taxon>
        <taxon>Camelineae</taxon>
        <taxon>Arabidopsis</taxon>
    </lineage>
</organism>
<keyword id="KW-0002">3D-structure</keyword>
<keyword id="KW-0963">Cytoplasm</keyword>
<keyword id="KW-0408">Iron</keyword>
<keyword id="KW-0479">Metal-binding</keyword>
<keyword id="KW-0539">Nucleus</keyword>
<keyword id="KW-0560">Oxidoreductase</keyword>
<keyword id="KW-1185">Reference proteome</keyword>
<name>PCO5_ARATH</name>
<proteinExistence type="evidence at protein level"/>
<accession>Q9LXT4</accession>
<feature type="chain" id="PRO_0000432453" description="Plant cysteine oxidase 5">
    <location>
        <begin position="1"/>
        <end position="242"/>
    </location>
</feature>
<feature type="binding site" evidence="3 10">
    <location>
        <position position="98"/>
    </location>
    <ligand>
        <name>Fe cation</name>
        <dbReference type="ChEBI" id="CHEBI:24875"/>
        <note>catalytic</note>
    </ligand>
</feature>
<feature type="binding site" evidence="3 10">
    <location>
        <position position="100"/>
    </location>
    <ligand>
        <name>Fe cation</name>
        <dbReference type="ChEBI" id="CHEBI:24875"/>
        <note>catalytic</note>
    </ligand>
</feature>
<feature type="binding site" evidence="3 10">
    <location>
        <position position="164"/>
    </location>
    <ligand>
        <name>Fe cation</name>
        <dbReference type="ChEBI" id="CHEBI:24875"/>
        <note>catalytic</note>
    </ligand>
</feature>
<feature type="mutagenesis site" description="Abolishes catalytic activity." evidence="3">
    <original>H</original>
    <variation>A</variation>
    <location>
        <position position="164"/>
    </location>
</feature>
<feature type="mutagenesis site" description="Strongly reduces catalytic activity." evidence="3">
    <original>D</original>
    <variation>A</variation>
    <location>
        <position position="176"/>
    </location>
</feature>
<feature type="mutagenesis site" description="Reduces catalytic activity." evidence="3">
    <original>Y</original>
    <variation>F</variation>
    <location>
        <position position="182"/>
    </location>
</feature>
<feature type="mutagenesis site" description="No effect on catalytic activity." evidence="3">
    <original>C</original>
    <variation>A</variation>
    <location>
        <position position="190"/>
    </location>
</feature>
<feature type="helix" evidence="11">
    <location>
        <begin position="4"/>
        <end position="15"/>
    </location>
</feature>
<feature type="strand" evidence="11">
    <location>
        <begin position="20"/>
        <end position="22"/>
    </location>
</feature>
<feature type="helix" evidence="11">
    <location>
        <begin position="24"/>
        <end position="34"/>
    </location>
</feature>
<feature type="helix" evidence="11">
    <location>
        <begin position="39"/>
        <end position="42"/>
    </location>
</feature>
<feature type="helix" evidence="11">
    <location>
        <begin position="45"/>
        <end position="48"/>
    </location>
</feature>
<feature type="turn" evidence="11">
    <location>
        <begin position="49"/>
        <end position="52"/>
    </location>
</feature>
<feature type="strand" evidence="11">
    <location>
        <begin position="71"/>
        <end position="78"/>
    </location>
</feature>
<feature type="strand" evidence="11">
    <location>
        <begin position="83"/>
        <end position="89"/>
    </location>
</feature>
<feature type="strand" evidence="11">
    <location>
        <begin position="94"/>
        <end position="98"/>
    </location>
</feature>
<feature type="strand" evidence="11">
    <location>
        <begin position="104"/>
        <end position="122"/>
    </location>
</feature>
<feature type="helix" evidence="11">
    <location>
        <begin position="124"/>
        <end position="126"/>
    </location>
</feature>
<feature type="turn" evidence="11">
    <location>
        <begin position="127"/>
        <end position="129"/>
    </location>
</feature>
<feature type="strand" evidence="11">
    <location>
        <begin position="136"/>
        <end position="149"/>
    </location>
</feature>
<feature type="strand" evidence="11">
    <location>
        <begin position="153"/>
        <end position="155"/>
    </location>
</feature>
<feature type="strand" evidence="11">
    <location>
        <begin position="157"/>
        <end position="160"/>
    </location>
</feature>
<feature type="strand" evidence="11">
    <location>
        <begin position="162"/>
        <end position="180"/>
    </location>
</feature>
<feature type="turn" evidence="11">
    <location>
        <begin position="184"/>
        <end position="187"/>
    </location>
</feature>
<feature type="strand" evidence="11">
    <location>
        <begin position="192"/>
        <end position="195"/>
    </location>
</feature>
<feature type="helix" evidence="12">
    <location>
        <begin position="208"/>
        <end position="210"/>
    </location>
</feature>
<feature type="strand" evidence="11">
    <location>
        <begin position="215"/>
        <end position="222"/>
    </location>
</feature>
<feature type="strand" evidence="11">
    <location>
        <begin position="230"/>
        <end position="233"/>
    </location>
</feature>
<comment type="function">
    <text evidence="1 2 3 7">Catalyzes the oxidation of N-terminal cysteine residues (N-Cys), thus preparing the protein for N-end rule pathway-mediated proteasomal degradation, upstream of the N-end rule enzymes ATE1, ATE2 and PRT6 (Probable) (PubMed:29848548, PubMed:32868422, PubMed:33207269). Controls the preparation of the group VII ethylene response factor (ERF-VII) proteins for degradation via the 26S proteasome N-end rule pathway (Probable) (PubMed:29848548, PubMed:32868422, PubMed:33207269). Acts as an oxygen sensor that controls the stability of ERF-VII proteins, which are stabilized in flooding-induced hypoxia, and regulate transcriptional adaptation to these adverse conditions (Probable) (PubMed:29848548).</text>
</comment>
<comment type="catalytic activity">
    <reaction evidence="1 2 3 7">
        <text>L-cysteine + O2 = 3-sulfino-L-alanine + H(+)</text>
        <dbReference type="Rhea" id="RHEA:20441"/>
        <dbReference type="ChEBI" id="CHEBI:15378"/>
        <dbReference type="ChEBI" id="CHEBI:15379"/>
        <dbReference type="ChEBI" id="CHEBI:35235"/>
        <dbReference type="ChEBI" id="CHEBI:61085"/>
        <dbReference type="EC" id="1.13.11.20"/>
    </reaction>
    <physiologicalReaction direction="left-to-right" evidence="1 2 3 7">
        <dbReference type="Rhea" id="RHEA:20442"/>
    </physiologicalReaction>
</comment>
<comment type="cofactor">
    <cofactor evidence="3">
        <name>Fe(2+)</name>
        <dbReference type="ChEBI" id="CHEBI:29033"/>
    </cofactor>
    <text evidence="3">Binds 1 Fe(2+) cation per subunit.</text>
</comment>
<comment type="biophysicochemical properties">
    <kinetics>
        <KM evidence="1">0.16 mM for CGGAIISDFIPPPR peptide</KM>
        <Vmax evidence="1">16.1 umol/min/mg enzyme with CGGAIISDFIPPPR peptide as substrate</Vmax>
        <text evidence="1">kcat is 7.9 sec(-1) with CGGAIISDFIPPPR peptide as substrate.</text>
    </kinetics>
    <phDependence>
        <text evidence="1">Optimum pH is 9.0 with CGGAIISDFIPPPR peptide as substrate.</text>
    </phDependence>
</comment>
<comment type="subcellular location">
    <subcellularLocation>
        <location evidence="7">Nucleus</location>
    </subcellularLocation>
    <subcellularLocation>
        <location evidence="7">Cytoplasm</location>
    </subcellularLocation>
</comment>
<comment type="similarity">
    <text evidence="6">Belongs to the cysteine dioxygenase family.</text>
</comment>
<gene>
    <name evidence="4" type="primary">PCO5</name>
    <name evidence="8" type="ordered locus">At3g58670</name>
    <name evidence="9" type="ORF">T20N10.20</name>
</gene>